<organism>
    <name type="scientific">Saccharomyces cerevisiae (strain ATCC 204508 / S288c)</name>
    <name type="common">Baker's yeast</name>
    <dbReference type="NCBI Taxonomy" id="559292"/>
    <lineage>
        <taxon>Eukaryota</taxon>
        <taxon>Fungi</taxon>
        <taxon>Dikarya</taxon>
        <taxon>Ascomycota</taxon>
        <taxon>Saccharomycotina</taxon>
        <taxon>Saccharomycetes</taxon>
        <taxon>Saccharomycetales</taxon>
        <taxon>Saccharomycetaceae</taxon>
        <taxon>Saccharomyces</taxon>
    </lineage>
</organism>
<reference key="1">
    <citation type="journal article" date="1997" name="Nature">
        <title>The nucleotide sequence of Saccharomyces cerevisiae chromosome IV.</title>
        <authorList>
            <person name="Jacq C."/>
            <person name="Alt-Moerbe J."/>
            <person name="Andre B."/>
            <person name="Arnold W."/>
            <person name="Bahr A."/>
            <person name="Ballesta J.P.G."/>
            <person name="Bargues M."/>
            <person name="Baron L."/>
            <person name="Becker A."/>
            <person name="Biteau N."/>
            <person name="Bloecker H."/>
            <person name="Blugeon C."/>
            <person name="Boskovic J."/>
            <person name="Brandt P."/>
            <person name="Brueckner M."/>
            <person name="Buitrago M.J."/>
            <person name="Coster F."/>
            <person name="Delaveau T."/>
            <person name="del Rey F."/>
            <person name="Dujon B."/>
            <person name="Eide L.G."/>
            <person name="Garcia-Cantalejo J.M."/>
            <person name="Goffeau A."/>
            <person name="Gomez-Peris A."/>
            <person name="Granotier C."/>
            <person name="Hanemann V."/>
            <person name="Hankeln T."/>
            <person name="Hoheisel J.D."/>
            <person name="Jaeger W."/>
            <person name="Jimenez A."/>
            <person name="Jonniaux J.-L."/>
            <person name="Kraemer C."/>
            <person name="Kuester H."/>
            <person name="Laamanen P."/>
            <person name="Legros Y."/>
            <person name="Louis E.J."/>
            <person name="Moeller-Rieker S."/>
            <person name="Monnet A."/>
            <person name="Moro M."/>
            <person name="Mueller-Auer S."/>
            <person name="Nussbaumer B."/>
            <person name="Paricio N."/>
            <person name="Paulin L."/>
            <person name="Perea J."/>
            <person name="Perez-Alonso M."/>
            <person name="Perez-Ortin J.E."/>
            <person name="Pohl T.M."/>
            <person name="Prydz H."/>
            <person name="Purnelle B."/>
            <person name="Rasmussen S.W."/>
            <person name="Remacha M.A."/>
            <person name="Revuelta J.L."/>
            <person name="Rieger M."/>
            <person name="Salom D."/>
            <person name="Saluz H.P."/>
            <person name="Saiz J.E."/>
            <person name="Saren A.-M."/>
            <person name="Schaefer M."/>
            <person name="Scharfe M."/>
            <person name="Schmidt E.R."/>
            <person name="Schneider C."/>
            <person name="Scholler P."/>
            <person name="Schwarz S."/>
            <person name="Soler-Mira A."/>
            <person name="Urrestarazu L.A."/>
            <person name="Verhasselt P."/>
            <person name="Vissers S."/>
            <person name="Voet M."/>
            <person name="Volckaert G."/>
            <person name="Wagner G."/>
            <person name="Wambutt R."/>
            <person name="Wedler E."/>
            <person name="Wedler H."/>
            <person name="Woelfl S."/>
            <person name="Harris D.E."/>
            <person name="Bowman S."/>
            <person name="Brown D."/>
            <person name="Churcher C.M."/>
            <person name="Connor R."/>
            <person name="Dedman K."/>
            <person name="Gentles S."/>
            <person name="Hamlin N."/>
            <person name="Hunt S."/>
            <person name="Jones L."/>
            <person name="McDonald S."/>
            <person name="Murphy L.D."/>
            <person name="Niblett D."/>
            <person name="Odell C."/>
            <person name="Oliver K."/>
            <person name="Rajandream M.A."/>
            <person name="Richards C."/>
            <person name="Shore L."/>
            <person name="Walsh S.V."/>
            <person name="Barrell B.G."/>
            <person name="Dietrich F.S."/>
            <person name="Mulligan J.T."/>
            <person name="Allen E."/>
            <person name="Araujo R."/>
            <person name="Aviles E."/>
            <person name="Berno A."/>
            <person name="Carpenter J."/>
            <person name="Chen E."/>
            <person name="Cherry J.M."/>
            <person name="Chung E."/>
            <person name="Duncan M."/>
            <person name="Hunicke-Smith S."/>
            <person name="Hyman R.W."/>
            <person name="Komp C."/>
            <person name="Lashkari D."/>
            <person name="Lew H."/>
            <person name="Lin D."/>
            <person name="Mosedale D."/>
            <person name="Nakahara K."/>
            <person name="Namath A."/>
            <person name="Oefner P."/>
            <person name="Oh C."/>
            <person name="Petel F.X."/>
            <person name="Roberts D."/>
            <person name="Schramm S."/>
            <person name="Schroeder M."/>
            <person name="Shogren T."/>
            <person name="Shroff N."/>
            <person name="Winant A."/>
            <person name="Yelton M.A."/>
            <person name="Botstein D."/>
            <person name="Davis R.W."/>
            <person name="Johnston M."/>
            <person name="Andrews S."/>
            <person name="Brinkman R."/>
            <person name="Cooper J."/>
            <person name="Ding H."/>
            <person name="Du Z."/>
            <person name="Favello A."/>
            <person name="Fulton L."/>
            <person name="Gattung S."/>
            <person name="Greco T."/>
            <person name="Hallsworth K."/>
            <person name="Hawkins J."/>
            <person name="Hillier L.W."/>
            <person name="Jier M."/>
            <person name="Johnson D."/>
            <person name="Johnston L."/>
            <person name="Kirsten J."/>
            <person name="Kucaba T."/>
            <person name="Langston Y."/>
            <person name="Latreille P."/>
            <person name="Le T."/>
            <person name="Mardis E."/>
            <person name="Menezes S."/>
            <person name="Miller N."/>
            <person name="Nhan M."/>
            <person name="Pauley A."/>
            <person name="Peluso D."/>
            <person name="Rifkin L."/>
            <person name="Riles L."/>
            <person name="Taich A."/>
            <person name="Trevaskis E."/>
            <person name="Vignati D."/>
            <person name="Wilcox L."/>
            <person name="Wohldman P."/>
            <person name="Vaudin M."/>
            <person name="Wilson R."/>
            <person name="Waterston R."/>
            <person name="Albermann K."/>
            <person name="Hani J."/>
            <person name="Heumann K."/>
            <person name="Kleine K."/>
            <person name="Mewes H.-W."/>
            <person name="Zollner A."/>
            <person name="Zaccaria P."/>
        </authorList>
    </citation>
    <scope>NUCLEOTIDE SEQUENCE [LARGE SCALE GENOMIC DNA]</scope>
    <source>
        <strain>ATCC 204508 / S288c</strain>
    </source>
</reference>
<reference key="2">
    <citation type="journal article" date="2014" name="G3 (Bethesda)">
        <title>The reference genome sequence of Saccharomyces cerevisiae: Then and now.</title>
        <authorList>
            <person name="Engel S.R."/>
            <person name="Dietrich F.S."/>
            <person name="Fisk D.G."/>
            <person name="Binkley G."/>
            <person name="Balakrishnan R."/>
            <person name="Costanzo M.C."/>
            <person name="Dwight S.S."/>
            <person name="Hitz B.C."/>
            <person name="Karra K."/>
            <person name="Nash R.S."/>
            <person name="Weng S."/>
            <person name="Wong E.D."/>
            <person name="Lloyd P."/>
            <person name="Skrzypek M.S."/>
            <person name="Miyasato S.R."/>
            <person name="Simison M."/>
            <person name="Cherry J.M."/>
        </authorList>
    </citation>
    <scope>GENOME REANNOTATION</scope>
    <source>
        <strain>ATCC 204508 / S288c</strain>
    </source>
</reference>
<keyword id="KW-0472">Membrane</keyword>
<keyword id="KW-0812">Transmembrane</keyword>
<keyword id="KW-1133">Transmembrane helix</keyword>
<proteinExistence type="uncertain"/>
<accession>P87274</accession>
<name>YD526_YEAST</name>
<feature type="chain" id="PRO_0000299903" description="Putative uncharacterized protein YDR526C">
    <location>
        <begin position="1"/>
        <end position="156"/>
    </location>
</feature>
<feature type="transmembrane region" description="Helical" evidence="1">
    <location>
        <begin position="21"/>
        <end position="41"/>
    </location>
</feature>
<feature type="transmembrane region" description="Helical" evidence="1">
    <location>
        <begin position="54"/>
        <end position="74"/>
    </location>
</feature>
<feature type="transmembrane region" description="Helical" evidence="1">
    <location>
        <begin position="80"/>
        <end position="100"/>
    </location>
</feature>
<sequence length="156" mass="16916">MPCLLPPTQVPEAPSISANNGVLFSSFALLFMFFNSLAISLGSKELYRSSRSCTICSSLIPCRTLIFSLWIDFASDSGASVLVCCFSASLPLVFFFWALFSLSLSFQDDIFLGLYNSGNPVPQLLVLRVPLSLLSTESDVSFSTISPSKSITMVAE</sequence>
<evidence type="ECO:0000255" key="1"/>
<evidence type="ECO:0000305" key="2"/>
<evidence type="ECO:0000305" key="3">
    <source>
    </source>
</evidence>
<comment type="subcellular location">
    <subcellularLocation>
        <location evidence="2">Membrane</location>
        <topology evidence="2">Multi-pass membrane protein</topology>
    </subcellularLocation>
</comment>
<comment type="miscellaneous">
    <text evidence="2">Partially overlaps RBA50.</text>
</comment>
<comment type="caution">
    <text evidence="3">Product of a dubious gene prediction unlikely to encode a functional protein. Because of that it is not part of the S.cerevisiae S288c complete/reference proteome set.</text>
</comment>
<protein>
    <recommendedName>
        <fullName>Putative uncharacterized protein YDR526C</fullName>
    </recommendedName>
</protein>
<gene>
    <name type="ordered locus">YDR526C</name>
</gene>
<dbReference type="EMBL" id="U33057">
    <property type="protein sequence ID" value="AAB64979.1"/>
    <property type="molecule type" value="Genomic_DNA"/>
</dbReference>
<dbReference type="PIR" id="S69594">
    <property type="entry name" value="S69594"/>
</dbReference>
<dbReference type="DIP" id="DIP-5123N"/>
<dbReference type="IntAct" id="P87274">
    <property type="interactions" value="1"/>
</dbReference>
<dbReference type="PaxDb" id="4932-YDR526C"/>
<dbReference type="EnsemblFungi" id="YDR526C_mRNA">
    <property type="protein sequence ID" value="YDR526C"/>
    <property type="gene ID" value="YDR526C"/>
</dbReference>
<dbReference type="AGR" id="SGD:S000002934"/>
<dbReference type="SGD" id="S000002934">
    <property type="gene designation" value="YDR526C"/>
</dbReference>
<dbReference type="HOGENOM" id="CLU_1688121_0_0_1"/>
<dbReference type="GO" id="GO:0016020">
    <property type="term" value="C:membrane"/>
    <property type="evidence" value="ECO:0007669"/>
    <property type="project" value="UniProtKB-SubCell"/>
</dbReference>